<accession>A5FUJ7</accession>
<keyword id="KW-0450">Lipoyl</keyword>
<keyword id="KW-1185">Reference proteome</keyword>
<proteinExistence type="inferred from homology"/>
<evidence type="ECO:0000255" key="1">
    <source>
        <dbReference type="HAMAP-Rule" id="MF_00272"/>
    </source>
</evidence>
<evidence type="ECO:0000255" key="2">
    <source>
        <dbReference type="PROSITE-ProRule" id="PRU01066"/>
    </source>
</evidence>
<name>GCSH_ACICJ</name>
<sequence>MTETRFSKDHEWVRLDGDVATVGITDHAQSALGDVVFVELPETGRHVDAGEACAVVESVKAASDVYAPLAGTVTEANGALADDPGMVNAQAESGAWFFRMTLDDRAAFDALLTADDYQAFLATL</sequence>
<dbReference type="EMBL" id="CP000697">
    <property type="protein sequence ID" value="ABQ29279.1"/>
    <property type="molecule type" value="Genomic_DNA"/>
</dbReference>
<dbReference type="RefSeq" id="WP_007422735.1">
    <property type="nucleotide sequence ID" value="NC_009484.1"/>
</dbReference>
<dbReference type="SMR" id="A5FUJ7"/>
<dbReference type="STRING" id="349163.Acry_0050"/>
<dbReference type="KEGG" id="acr:Acry_0050"/>
<dbReference type="eggNOG" id="COG0509">
    <property type="taxonomic scope" value="Bacteria"/>
</dbReference>
<dbReference type="HOGENOM" id="CLU_097408_2_0_5"/>
<dbReference type="Proteomes" id="UP000000245">
    <property type="component" value="Chromosome"/>
</dbReference>
<dbReference type="GO" id="GO:0005829">
    <property type="term" value="C:cytosol"/>
    <property type="evidence" value="ECO:0007669"/>
    <property type="project" value="TreeGrafter"/>
</dbReference>
<dbReference type="GO" id="GO:0005960">
    <property type="term" value="C:glycine cleavage complex"/>
    <property type="evidence" value="ECO:0007669"/>
    <property type="project" value="InterPro"/>
</dbReference>
<dbReference type="GO" id="GO:0019464">
    <property type="term" value="P:glycine decarboxylation via glycine cleavage system"/>
    <property type="evidence" value="ECO:0007669"/>
    <property type="project" value="UniProtKB-UniRule"/>
</dbReference>
<dbReference type="CDD" id="cd06848">
    <property type="entry name" value="GCS_H"/>
    <property type="match status" value="1"/>
</dbReference>
<dbReference type="Gene3D" id="2.40.50.100">
    <property type="match status" value="1"/>
</dbReference>
<dbReference type="HAMAP" id="MF_00272">
    <property type="entry name" value="GcvH"/>
    <property type="match status" value="1"/>
</dbReference>
<dbReference type="InterPro" id="IPR003016">
    <property type="entry name" value="2-oxoA_DH_lipoyl-BS"/>
</dbReference>
<dbReference type="InterPro" id="IPR000089">
    <property type="entry name" value="Biotin_lipoyl"/>
</dbReference>
<dbReference type="InterPro" id="IPR002930">
    <property type="entry name" value="GCV_H"/>
</dbReference>
<dbReference type="InterPro" id="IPR033753">
    <property type="entry name" value="GCV_H/Fam206"/>
</dbReference>
<dbReference type="InterPro" id="IPR017453">
    <property type="entry name" value="GCV_H_sub"/>
</dbReference>
<dbReference type="InterPro" id="IPR011053">
    <property type="entry name" value="Single_hybrid_motif"/>
</dbReference>
<dbReference type="NCBIfam" id="TIGR00527">
    <property type="entry name" value="gcvH"/>
    <property type="match status" value="1"/>
</dbReference>
<dbReference type="NCBIfam" id="NF002270">
    <property type="entry name" value="PRK01202.1"/>
    <property type="match status" value="1"/>
</dbReference>
<dbReference type="PANTHER" id="PTHR11715">
    <property type="entry name" value="GLYCINE CLEAVAGE SYSTEM H PROTEIN"/>
    <property type="match status" value="1"/>
</dbReference>
<dbReference type="PANTHER" id="PTHR11715:SF3">
    <property type="entry name" value="GLYCINE CLEAVAGE SYSTEM H PROTEIN-RELATED"/>
    <property type="match status" value="1"/>
</dbReference>
<dbReference type="Pfam" id="PF01597">
    <property type="entry name" value="GCV_H"/>
    <property type="match status" value="1"/>
</dbReference>
<dbReference type="SUPFAM" id="SSF51230">
    <property type="entry name" value="Single hybrid motif"/>
    <property type="match status" value="1"/>
</dbReference>
<dbReference type="PROSITE" id="PS50968">
    <property type="entry name" value="BIOTINYL_LIPOYL"/>
    <property type="match status" value="1"/>
</dbReference>
<dbReference type="PROSITE" id="PS00189">
    <property type="entry name" value="LIPOYL"/>
    <property type="match status" value="1"/>
</dbReference>
<feature type="chain" id="PRO_1000022187" description="Glycine cleavage system H protein">
    <location>
        <begin position="1"/>
        <end position="124"/>
    </location>
</feature>
<feature type="domain" description="Lipoyl-binding" evidence="2">
    <location>
        <begin position="19"/>
        <end position="101"/>
    </location>
</feature>
<feature type="modified residue" description="N6-lipoyllysine" evidence="1">
    <location>
        <position position="60"/>
    </location>
</feature>
<organism>
    <name type="scientific">Acidiphilium cryptum (strain JF-5)</name>
    <dbReference type="NCBI Taxonomy" id="349163"/>
    <lineage>
        <taxon>Bacteria</taxon>
        <taxon>Pseudomonadati</taxon>
        <taxon>Pseudomonadota</taxon>
        <taxon>Alphaproteobacteria</taxon>
        <taxon>Acetobacterales</taxon>
        <taxon>Acidocellaceae</taxon>
        <taxon>Acidiphilium</taxon>
    </lineage>
</organism>
<gene>
    <name evidence="1" type="primary">gcvH</name>
    <name type="ordered locus">Acry_0050</name>
</gene>
<comment type="function">
    <text evidence="1">The glycine cleavage system catalyzes the degradation of glycine. The H protein shuttles the methylamine group of glycine from the P protein to the T protein.</text>
</comment>
<comment type="cofactor">
    <cofactor evidence="1">
        <name>(R)-lipoate</name>
        <dbReference type="ChEBI" id="CHEBI:83088"/>
    </cofactor>
    <text evidence="1">Binds 1 lipoyl cofactor covalently.</text>
</comment>
<comment type="subunit">
    <text evidence="1">The glycine cleavage system is composed of four proteins: P, T, L and H.</text>
</comment>
<comment type="similarity">
    <text evidence="1">Belongs to the GcvH family.</text>
</comment>
<protein>
    <recommendedName>
        <fullName evidence="1">Glycine cleavage system H protein</fullName>
    </recommendedName>
</protein>
<reference key="1">
    <citation type="submission" date="2007-05" db="EMBL/GenBank/DDBJ databases">
        <title>Complete sequence of chromosome of Acidiphilium cryptum JF-5.</title>
        <authorList>
            <consortium name="US DOE Joint Genome Institute"/>
            <person name="Copeland A."/>
            <person name="Lucas S."/>
            <person name="Lapidus A."/>
            <person name="Barry K."/>
            <person name="Detter J.C."/>
            <person name="Glavina del Rio T."/>
            <person name="Hammon N."/>
            <person name="Israni S."/>
            <person name="Dalin E."/>
            <person name="Tice H."/>
            <person name="Pitluck S."/>
            <person name="Sims D."/>
            <person name="Brettin T."/>
            <person name="Bruce D."/>
            <person name="Han C."/>
            <person name="Schmutz J."/>
            <person name="Larimer F."/>
            <person name="Land M."/>
            <person name="Hauser L."/>
            <person name="Kyrpides N."/>
            <person name="Kim E."/>
            <person name="Magnuson T."/>
            <person name="Richardson P."/>
        </authorList>
    </citation>
    <scope>NUCLEOTIDE SEQUENCE [LARGE SCALE GENOMIC DNA]</scope>
    <source>
        <strain>JF-5</strain>
    </source>
</reference>